<feature type="chain" id="PRO_0000458487" description="Autotransproter heptosyltransferase BAHTCr">
    <location>
        <begin position="1"/>
        <end position="409"/>
    </location>
</feature>
<feature type="active site" description="Proton acceptor" evidence="6">
    <location>
        <position position="110"/>
    </location>
</feature>
<feature type="binding site" evidence="2">
    <location>
        <position position="107"/>
    </location>
    <ligand>
        <name>ADP-D-glycero-beta-D-manno-heptose</name>
        <dbReference type="ChEBI" id="CHEBI:59967"/>
    </ligand>
</feature>
<feature type="binding site" evidence="2">
    <location>
        <position position="108"/>
    </location>
    <ligand>
        <name>ADP-D-glycero-beta-D-manno-heptose</name>
        <dbReference type="ChEBI" id="CHEBI:59967"/>
    </ligand>
</feature>
<feature type="binding site" evidence="2">
    <location>
        <position position="109"/>
    </location>
    <ligand>
        <name>ADP-D-glycero-beta-D-manno-heptose</name>
        <dbReference type="ChEBI" id="CHEBI:59967"/>
    </ligand>
</feature>
<feature type="binding site" evidence="2">
    <location>
        <position position="224"/>
    </location>
    <ligand>
        <name>ADP-D-glycero-beta-D-manno-heptose</name>
        <dbReference type="ChEBI" id="CHEBI:59967"/>
    </ligand>
</feature>
<feature type="binding site" evidence="2">
    <location>
        <position position="226"/>
    </location>
    <ligand>
        <name>ADP-D-glycero-beta-D-manno-heptose</name>
        <dbReference type="ChEBI" id="CHEBI:59967"/>
    </ligand>
</feature>
<feature type="binding site" evidence="2">
    <location>
        <position position="230"/>
    </location>
    <ligand>
        <name>ADP-D-glycero-beta-D-manno-heptose</name>
        <dbReference type="ChEBI" id="CHEBI:59967"/>
    </ligand>
</feature>
<feature type="binding site" evidence="2">
    <location>
        <position position="257"/>
    </location>
    <ligand>
        <name>ADP-D-glycero-beta-D-manno-heptose</name>
        <dbReference type="ChEBI" id="CHEBI:59967"/>
    </ligand>
</feature>
<feature type="binding site" evidence="2">
    <location>
        <position position="302"/>
    </location>
    <ligand>
        <name>ADP-D-glycero-beta-D-manno-heptose</name>
        <dbReference type="ChEBI" id="CHEBI:59967"/>
    </ligand>
</feature>
<feature type="binding site" evidence="2">
    <location>
        <position position="326"/>
    </location>
    <ligand>
        <name>ADP-D-glycero-beta-D-manno-heptose</name>
        <dbReference type="ChEBI" id="CHEBI:59967"/>
    </ligand>
</feature>
<feature type="binding site" evidence="2">
    <location>
        <position position="339"/>
    </location>
    <ligand>
        <name>Fe(3+)</name>
        <dbReference type="ChEBI" id="CHEBI:29034"/>
        <note>structural</note>
    </ligand>
</feature>
<feature type="binding site" evidence="2">
    <location>
        <position position="342"/>
    </location>
    <ligand>
        <name>Fe(3+)</name>
        <dbReference type="ChEBI" id="CHEBI:29034"/>
        <note>structural</note>
    </ligand>
</feature>
<feature type="binding site" evidence="2">
    <location>
        <position position="358"/>
    </location>
    <ligand>
        <name>Fe(3+)</name>
        <dbReference type="ChEBI" id="CHEBI:29034"/>
        <note>structural</note>
    </ligand>
</feature>
<feature type="binding site" evidence="2">
    <location>
        <position position="370"/>
    </location>
    <ligand>
        <name>Fe(3+)</name>
        <dbReference type="ChEBI" id="CHEBI:29034"/>
        <note>structural</note>
    </ligand>
</feature>
<feature type="mutagenesis site" description="Loss of catalytic activity. Loss of CARC glycosylation. Severely reduces bacterial colonization of the gastrointestinal tract of orally infected C57BL/6 mice." evidence="3">
    <original>D</original>
    <variation>A</variation>
    <location>
        <position position="110"/>
    </location>
</feature>
<name>BAHT_CITRI</name>
<geneLocation type="plasmid" evidence="8">
    <name>pCROD1</name>
</geneLocation>
<comment type="function">
    <text evidence="3">Glycosylates autotransporter CARC (PubMed:25211077). By glycosylating CARC, involved in the colonization of the mouse host gastrointestinal tract (PubMed:25211077).</text>
</comment>
<comment type="catalytic activity">
    <reaction evidence="6">
        <text>ADP-D-glycero-beta-D-manno-heptose + L-seryl-[protein] = O-(D-glycero-alpha-D-manno-heptosyl)-L-seryl-[protein] + ADP + H(+)</text>
        <dbReference type="Rhea" id="RHEA:75903"/>
        <dbReference type="Rhea" id="RHEA-COMP:9863"/>
        <dbReference type="Rhea" id="RHEA-COMP:18605"/>
        <dbReference type="ChEBI" id="CHEBI:15378"/>
        <dbReference type="ChEBI" id="CHEBI:29999"/>
        <dbReference type="ChEBI" id="CHEBI:59967"/>
        <dbReference type="ChEBI" id="CHEBI:194481"/>
        <dbReference type="ChEBI" id="CHEBI:456216"/>
    </reaction>
    <physiologicalReaction direction="left-to-right" evidence="6">
        <dbReference type="Rhea" id="RHEA:75904"/>
    </physiologicalReaction>
</comment>
<comment type="catalytic activity">
    <reaction evidence="6">
        <text>ADP-L-glycero-beta-D-manno-heptose + L-seryl-[protein] = O-(L-glycero-alpha-D-manno-heptosyl)-L-seryl-[protein] + ADP + H(+)</text>
        <dbReference type="Rhea" id="RHEA:75907"/>
        <dbReference type="Rhea" id="RHEA-COMP:9863"/>
        <dbReference type="Rhea" id="RHEA-COMP:18606"/>
        <dbReference type="ChEBI" id="CHEBI:15378"/>
        <dbReference type="ChEBI" id="CHEBI:29999"/>
        <dbReference type="ChEBI" id="CHEBI:61506"/>
        <dbReference type="ChEBI" id="CHEBI:194483"/>
        <dbReference type="ChEBI" id="CHEBI:456216"/>
    </reaction>
    <physiologicalReaction direction="left-to-right" evidence="6">
        <dbReference type="Rhea" id="RHEA:75908"/>
    </physiologicalReaction>
</comment>
<comment type="cofactor">
    <cofactor evidence="2">
        <name>Fe(3+)</name>
        <dbReference type="ChEBI" id="CHEBI:29034"/>
    </cofactor>
    <text evidence="2">Binds 1 Fe(3+) cation per subunit.</text>
</comment>
<comment type="subunit">
    <text evidence="2">Homododecamer composed of 6 homodimers forming a ring.</text>
</comment>
<comment type="subcellular location">
    <subcellularLocation>
        <location evidence="1">Cytoplasm</location>
    </subcellularLocation>
</comment>
<comment type="disruption phenotype">
    <text evidence="3">Severely reduces bacterial colonization of the gastrointestinal tract of orally infected C57BL/6 mice.</text>
</comment>
<comment type="similarity">
    <text evidence="5">Belongs to the glycosyltransferase 9 family.</text>
</comment>
<sequence length="409" mass="46308">MQKSLATFFISPPEIPTQHGPDNILYDFNDGARVLLPEGKWHVRLLDADSGNILFCCDINNGWVTSSKKYFVRFRIQVFRQGEDSPLLDETLNLTDRDVLISFPTGTLGDLLGWFPYAERFQSLHQCRLECTMAQDIIDLLAPQYPQICFSTPEKPRTTEPYATYRVGLYFGGDTNNQPVDFRQVGFHRSAGYILGVDPREAPVRLNLSAPCTIREPYVCIATQSTCQAKYWNNGTGWSEVVAHLKSLGYRVLCIDREAHYGQGFVWNHIPWGAEDFTGSFPLQERVNLLRHASFFIGLASGLSWLAWATGIPVVLISGFSLPDSEFYTPWRVFNSHGCNGCWDDTSLNFDHKDFLWCPRHKNTDRQFECTRLITGTQVNGVISRLHASLMKQGDKACLTKGTNNEQGL</sequence>
<protein>
    <recommendedName>
        <fullName evidence="4">Autotransproter heptosyltransferase BAHTCr</fullName>
        <ecNumber evidence="3">2.4.99.-</ecNumber>
    </recommendedName>
    <alternativeName>
        <fullName evidence="4">BAHTCr</fullName>
    </alternativeName>
</protein>
<keyword id="KW-0963">Cytoplasm</keyword>
<keyword id="KW-0328">Glycosyltransferase</keyword>
<keyword id="KW-0408">Iron</keyword>
<keyword id="KW-0479">Metal-binding</keyword>
<keyword id="KW-0614">Plasmid</keyword>
<keyword id="KW-1185">Reference proteome</keyword>
<keyword id="KW-0808">Transferase</keyword>
<proteinExistence type="evidence at protein level"/>
<gene>
    <name evidence="7" type="ordered locus">ROD_p1111</name>
</gene>
<reference evidence="8" key="1">
    <citation type="journal article" date="2010" name="J. Bacteriol.">
        <title>The Citrobacter rodentium genome sequence reveals convergent evolution with human pathogenic Escherichia coli.</title>
        <authorList>
            <person name="Petty N.K."/>
            <person name="Bulgin R."/>
            <person name="Crepin V.F."/>
            <person name="Cerdeno-Tarraga A.M."/>
            <person name="Schroeder G.N."/>
            <person name="Quail M.A."/>
            <person name="Lennard N."/>
            <person name="Corton C."/>
            <person name="Barron A."/>
            <person name="Clark L."/>
            <person name="Toribio A.L."/>
            <person name="Parkhill J."/>
            <person name="Dougan G."/>
            <person name="Frankel G."/>
            <person name="Thomson N.R."/>
        </authorList>
    </citation>
    <scope>NUCLEOTIDE SEQUENCE [LARGE SCALE GENOMIC DNA]</scope>
    <source>
        <strain evidence="8">ICC168</strain>
        <plasmid evidence="8">pCROD1</plasmid>
    </source>
</reference>
<reference evidence="5" key="2">
    <citation type="journal article" date="2014" name="Cell Host Microbe">
        <title>An iron-containing dodecameric heptosyltransferase family modifies bacterial autotransporters in pathogenesis.</title>
        <authorList>
            <person name="Lu Q."/>
            <person name="Yao Q."/>
            <person name="Xu Y."/>
            <person name="Li L."/>
            <person name="Li S."/>
            <person name="Liu Y."/>
            <person name="Gao W."/>
            <person name="Niu M."/>
            <person name="Sharon M."/>
            <person name="Ben-Nissan G."/>
            <person name="Zamyatina A."/>
            <person name="Liu X."/>
            <person name="Chen S."/>
            <person name="Shao F."/>
        </authorList>
    </citation>
    <scope>FUNCTION</scope>
    <scope>CATALYTIC ACTIVITY</scope>
    <scope>DISRUPTION PHENOTYPE</scope>
    <scope>ACTIVE SITE</scope>
    <scope>MUTAGENESIS OF ASP-110</scope>
</reference>
<organism evidence="8">
    <name type="scientific">Citrobacter rodentium (strain ICC168)</name>
    <name type="common">Citrobacter freundii biotype 4280</name>
    <dbReference type="NCBI Taxonomy" id="637910"/>
    <lineage>
        <taxon>Bacteria</taxon>
        <taxon>Pseudomonadati</taxon>
        <taxon>Pseudomonadota</taxon>
        <taxon>Gammaproteobacteria</taxon>
        <taxon>Enterobacterales</taxon>
        <taxon>Enterobacteriaceae</taxon>
        <taxon>Citrobacter</taxon>
    </lineage>
</organism>
<accession>D2TV87</accession>
<dbReference type="EC" id="2.4.99.-" evidence="3"/>
<dbReference type="EMBL" id="FN543503">
    <property type="protein sequence ID" value="CBG91773.1"/>
    <property type="molecule type" value="Genomic_DNA"/>
</dbReference>
<dbReference type="RefSeq" id="WP_012908907.1">
    <property type="nucleotide sequence ID" value="NC_013717.1"/>
</dbReference>
<dbReference type="SMR" id="D2TV87"/>
<dbReference type="KEGG" id="cro:ROD_p1111"/>
<dbReference type="HOGENOM" id="CLU_044689_0_0_6"/>
<dbReference type="OrthoDB" id="5561008at2"/>
<dbReference type="PHI-base" id="PHI:5228"/>
<dbReference type="Proteomes" id="UP000001889">
    <property type="component" value="Plasmid pCROD1"/>
</dbReference>
<dbReference type="GO" id="GO:0005737">
    <property type="term" value="C:cytoplasm"/>
    <property type="evidence" value="ECO:0007669"/>
    <property type="project" value="UniProtKB-SubCell"/>
</dbReference>
<dbReference type="GO" id="GO:0016757">
    <property type="term" value="F:glycosyltransferase activity"/>
    <property type="evidence" value="ECO:0007669"/>
    <property type="project" value="UniProtKB-KW"/>
</dbReference>
<dbReference type="GO" id="GO:0046872">
    <property type="term" value="F:metal ion binding"/>
    <property type="evidence" value="ECO:0007669"/>
    <property type="project" value="UniProtKB-KW"/>
</dbReference>
<dbReference type="CDD" id="cd03789">
    <property type="entry name" value="GT9_LPS_heptosyltransferase"/>
    <property type="match status" value="1"/>
</dbReference>
<dbReference type="FunFam" id="3.40.50.2000:FF:000414">
    <property type="entry name" value="Autotransporter strand-loop-strand O-heptosyltransferase"/>
    <property type="match status" value="1"/>
</dbReference>
<dbReference type="Gene3D" id="3.40.50.2000">
    <property type="entry name" value="Glycogen Phosphorylase B"/>
    <property type="match status" value="1"/>
</dbReference>
<dbReference type="InterPro" id="IPR030929">
    <property type="entry name" value="Aah/TibC-like"/>
</dbReference>
<dbReference type="InterPro" id="IPR002201">
    <property type="entry name" value="Glyco_trans_9"/>
</dbReference>
<dbReference type="InterPro" id="IPR049327">
    <property type="entry name" value="TibC/BAHTCr-like_N"/>
</dbReference>
<dbReference type="NCBIfam" id="TIGR04414">
    <property type="entry name" value="hepto_Aah_TibC"/>
    <property type="match status" value="1"/>
</dbReference>
<dbReference type="Pfam" id="PF01075">
    <property type="entry name" value="Glyco_transf_9"/>
    <property type="match status" value="1"/>
</dbReference>
<dbReference type="Pfam" id="PF21129">
    <property type="entry name" value="TibC_1st"/>
    <property type="match status" value="1"/>
</dbReference>
<dbReference type="SUPFAM" id="SSF53756">
    <property type="entry name" value="UDP-Glycosyltransferase/glycogen phosphorylase"/>
    <property type="match status" value="1"/>
</dbReference>
<evidence type="ECO:0000250" key="1">
    <source>
        <dbReference type="UniProtKB" id="Q93K96"/>
    </source>
</evidence>
<evidence type="ECO:0000250" key="2">
    <source>
        <dbReference type="UniProtKB" id="Q9S4K6"/>
    </source>
</evidence>
<evidence type="ECO:0000269" key="3">
    <source>
    </source>
</evidence>
<evidence type="ECO:0000303" key="4">
    <source>
    </source>
</evidence>
<evidence type="ECO:0000305" key="5"/>
<evidence type="ECO:0000305" key="6">
    <source>
    </source>
</evidence>
<evidence type="ECO:0000312" key="7">
    <source>
        <dbReference type="EMBL" id="CBG91773.1"/>
    </source>
</evidence>
<evidence type="ECO:0000312" key="8">
    <source>
        <dbReference type="Proteomes" id="UP000001889"/>
    </source>
</evidence>